<reference key="1">
    <citation type="journal article" date="2012" name="Environ. Microbiol.">
        <title>The genome sequence of Desulfatibacillum alkenivorans AK-01: a blueprint for anaerobic alkane oxidation.</title>
        <authorList>
            <person name="Callaghan A.V."/>
            <person name="Morris B.E."/>
            <person name="Pereira I.A."/>
            <person name="McInerney M.J."/>
            <person name="Austin R.N."/>
            <person name="Groves J.T."/>
            <person name="Kukor J.J."/>
            <person name="Suflita J.M."/>
            <person name="Young L.Y."/>
            <person name="Zylstra G.J."/>
            <person name="Wawrik B."/>
        </authorList>
    </citation>
    <scope>NUCLEOTIDE SEQUENCE [LARGE SCALE GENOMIC DNA]</scope>
    <source>
        <strain>AK-01</strain>
    </source>
</reference>
<protein>
    <recommendedName>
        <fullName evidence="1">Small ribosomal subunit protein uS15</fullName>
    </recommendedName>
    <alternativeName>
        <fullName evidence="2">30S ribosomal protein S15</fullName>
    </alternativeName>
</protein>
<feature type="chain" id="PRO_1000143103" description="Small ribosomal subunit protein uS15">
    <location>
        <begin position="1"/>
        <end position="89"/>
    </location>
</feature>
<keyword id="KW-1185">Reference proteome</keyword>
<keyword id="KW-0687">Ribonucleoprotein</keyword>
<keyword id="KW-0689">Ribosomal protein</keyword>
<keyword id="KW-0694">RNA-binding</keyword>
<keyword id="KW-0699">rRNA-binding</keyword>
<name>RS15_DESAL</name>
<proteinExistence type="inferred from homology"/>
<dbReference type="EMBL" id="CP001322">
    <property type="protein sequence ID" value="ACL06420.1"/>
    <property type="molecule type" value="Genomic_DNA"/>
</dbReference>
<dbReference type="RefSeq" id="WP_015949459.1">
    <property type="nucleotide sequence ID" value="NC_011768.1"/>
</dbReference>
<dbReference type="SMR" id="B8FCY9"/>
<dbReference type="KEGG" id="dal:Dalk_4742"/>
<dbReference type="eggNOG" id="COG0184">
    <property type="taxonomic scope" value="Bacteria"/>
</dbReference>
<dbReference type="HOGENOM" id="CLU_148518_0_0_7"/>
<dbReference type="Proteomes" id="UP000000739">
    <property type="component" value="Chromosome"/>
</dbReference>
<dbReference type="GO" id="GO:0022627">
    <property type="term" value="C:cytosolic small ribosomal subunit"/>
    <property type="evidence" value="ECO:0007669"/>
    <property type="project" value="TreeGrafter"/>
</dbReference>
<dbReference type="GO" id="GO:0019843">
    <property type="term" value="F:rRNA binding"/>
    <property type="evidence" value="ECO:0007669"/>
    <property type="project" value="UniProtKB-UniRule"/>
</dbReference>
<dbReference type="GO" id="GO:0003735">
    <property type="term" value="F:structural constituent of ribosome"/>
    <property type="evidence" value="ECO:0007669"/>
    <property type="project" value="InterPro"/>
</dbReference>
<dbReference type="GO" id="GO:0006412">
    <property type="term" value="P:translation"/>
    <property type="evidence" value="ECO:0007669"/>
    <property type="project" value="UniProtKB-UniRule"/>
</dbReference>
<dbReference type="CDD" id="cd00353">
    <property type="entry name" value="Ribosomal_S15p_S13e"/>
    <property type="match status" value="1"/>
</dbReference>
<dbReference type="FunFam" id="1.10.287.10:FF:000002">
    <property type="entry name" value="30S ribosomal protein S15"/>
    <property type="match status" value="1"/>
</dbReference>
<dbReference type="Gene3D" id="6.10.250.3130">
    <property type="match status" value="1"/>
</dbReference>
<dbReference type="Gene3D" id="1.10.287.10">
    <property type="entry name" value="S15/NS1, RNA-binding"/>
    <property type="match status" value="1"/>
</dbReference>
<dbReference type="HAMAP" id="MF_01343_B">
    <property type="entry name" value="Ribosomal_uS15_B"/>
    <property type="match status" value="1"/>
</dbReference>
<dbReference type="InterPro" id="IPR000589">
    <property type="entry name" value="Ribosomal_uS15"/>
</dbReference>
<dbReference type="InterPro" id="IPR005290">
    <property type="entry name" value="Ribosomal_uS15_bac-type"/>
</dbReference>
<dbReference type="InterPro" id="IPR009068">
    <property type="entry name" value="uS15_NS1_RNA-bd_sf"/>
</dbReference>
<dbReference type="NCBIfam" id="TIGR00952">
    <property type="entry name" value="S15_bact"/>
    <property type="match status" value="1"/>
</dbReference>
<dbReference type="PANTHER" id="PTHR23321">
    <property type="entry name" value="RIBOSOMAL PROTEIN S15, BACTERIAL AND ORGANELLAR"/>
    <property type="match status" value="1"/>
</dbReference>
<dbReference type="PANTHER" id="PTHR23321:SF26">
    <property type="entry name" value="SMALL RIBOSOMAL SUBUNIT PROTEIN US15M"/>
    <property type="match status" value="1"/>
</dbReference>
<dbReference type="Pfam" id="PF00312">
    <property type="entry name" value="Ribosomal_S15"/>
    <property type="match status" value="1"/>
</dbReference>
<dbReference type="SMART" id="SM01387">
    <property type="entry name" value="Ribosomal_S15"/>
    <property type="match status" value="1"/>
</dbReference>
<dbReference type="SUPFAM" id="SSF47060">
    <property type="entry name" value="S15/NS1 RNA-binding domain"/>
    <property type="match status" value="1"/>
</dbReference>
<dbReference type="PROSITE" id="PS00362">
    <property type="entry name" value="RIBOSOMAL_S15"/>
    <property type="match status" value="1"/>
</dbReference>
<organism>
    <name type="scientific">Desulfatibacillum aliphaticivorans</name>
    <dbReference type="NCBI Taxonomy" id="218208"/>
    <lineage>
        <taxon>Bacteria</taxon>
        <taxon>Pseudomonadati</taxon>
        <taxon>Thermodesulfobacteriota</taxon>
        <taxon>Desulfobacteria</taxon>
        <taxon>Desulfobacterales</taxon>
        <taxon>Desulfatibacillaceae</taxon>
        <taxon>Desulfatibacillum</taxon>
    </lineage>
</organism>
<sequence>MALTAKTKQELIEEFKTHDSDTGSPEVQVALLTNRITYLTEHFKTHKKDHHSRRGLLKLVGQRRRLLNYLKNKDVQRYRTLIEALGLRK</sequence>
<gene>
    <name evidence="1" type="primary">rpsO</name>
    <name type="ordered locus">Dalk_4742</name>
</gene>
<evidence type="ECO:0000255" key="1">
    <source>
        <dbReference type="HAMAP-Rule" id="MF_01343"/>
    </source>
</evidence>
<evidence type="ECO:0000305" key="2"/>
<comment type="function">
    <text evidence="1">One of the primary rRNA binding proteins, it binds directly to 16S rRNA where it helps nucleate assembly of the platform of the 30S subunit by binding and bridging several RNA helices of the 16S rRNA.</text>
</comment>
<comment type="function">
    <text evidence="1">Forms an intersubunit bridge (bridge B4) with the 23S rRNA of the 50S subunit in the ribosome.</text>
</comment>
<comment type="subunit">
    <text evidence="1">Part of the 30S ribosomal subunit. Forms a bridge to the 50S subunit in the 70S ribosome, contacting the 23S rRNA.</text>
</comment>
<comment type="similarity">
    <text evidence="1">Belongs to the universal ribosomal protein uS15 family.</text>
</comment>
<accession>B8FCY9</accession>